<gene>
    <name evidence="1" type="primary">acpS</name>
    <name type="ordered locus">LBJ_0900</name>
</gene>
<name>ACPS_LEPBJ</name>
<reference key="1">
    <citation type="journal article" date="2006" name="Proc. Natl. Acad. Sci. U.S.A.">
        <title>Genome reduction in Leptospira borgpetersenii reflects limited transmission potential.</title>
        <authorList>
            <person name="Bulach D.M."/>
            <person name="Zuerner R.L."/>
            <person name="Wilson P."/>
            <person name="Seemann T."/>
            <person name="McGrath A."/>
            <person name="Cullen P.A."/>
            <person name="Davis J."/>
            <person name="Johnson M."/>
            <person name="Kuczek E."/>
            <person name="Alt D.P."/>
            <person name="Peterson-Burch B."/>
            <person name="Coppel R.L."/>
            <person name="Rood J.I."/>
            <person name="Davies J.K."/>
            <person name="Adler B."/>
        </authorList>
    </citation>
    <scope>NUCLEOTIDE SEQUENCE [LARGE SCALE GENOMIC DNA]</scope>
    <source>
        <strain>JB197</strain>
    </source>
</reference>
<proteinExistence type="inferred from homology"/>
<feature type="chain" id="PRO_1000008443" description="Holo-[acyl-carrier-protein] synthase">
    <location>
        <begin position="1"/>
        <end position="124"/>
    </location>
</feature>
<feature type="binding site" evidence="1">
    <location>
        <position position="8"/>
    </location>
    <ligand>
        <name>Mg(2+)</name>
        <dbReference type="ChEBI" id="CHEBI:18420"/>
    </ligand>
</feature>
<feature type="binding site" evidence="1">
    <location>
        <position position="57"/>
    </location>
    <ligand>
        <name>Mg(2+)</name>
        <dbReference type="ChEBI" id="CHEBI:18420"/>
    </ligand>
</feature>
<organism>
    <name type="scientific">Leptospira borgpetersenii serovar Hardjo-bovis (strain JB197)</name>
    <dbReference type="NCBI Taxonomy" id="355277"/>
    <lineage>
        <taxon>Bacteria</taxon>
        <taxon>Pseudomonadati</taxon>
        <taxon>Spirochaetota</taxon>
        <taxon>Spirochaetia</taxon>
        <taxon>Leptospirales</taxon>
        <taxon>Leptospiraceae</taxon>
        <taxon>Leptospira</taxon>
    </lineage>
</organism>
<dbReference type="EC" id="2.7.8.7" evidence="1"/>
<dbReference type="EMBL" id="CP000350">
    <property type="protein sequence ID" value="ABJ75544.1"/>
    <property type="molecule type" value="Genomic_DNA"/>
</dbReference>
<dbReference type="RefSeq" id="WP_011669747.1">
    <property type="nucleotide sequence ID" value="NC_008510.1"/>
</dbReference>
<dbReference type="SMR" id="Q04U76"/>
<dbReference type="KEGG" id="lbj:LBJ_0900"/>
<dbReference type="HOGENOM" id="CLU_089696_2_1_12"/>
<dbReference type="Proteomes" id="UP000000656">
    <property type="component" value="Chromosome 1"/>
</dbReference>
<dbReference type="GO" id="GO:0005737">
    <property type="term" value="C:cytoplasm"/>
    <property type="evidence" value="ECO:0007669"/>
    <property type="project" value="UniProtKB-SubCell"/>
</dbReference>
<dbReference type="GO" id="GO:0008897">
    <property type="term" value="F:holo-[acyl-carrier-protein] synthase activity"/>
    <property type="evidence" value="ECO:0007669"/>
    <property type="project" value="UniProtKB-UniRule"/>
</dbReference>
<dbReference type="GO" id="GO:0000287">
    <property type="term" value="F:magnesium ion binding"/>
    <property type="evidence" value="ECO:0007669"/>
    <property type="project" value="UniProtKB-UniRule"/>
</dbReference>
<dbReference type="GO" id="GO:0006633">
    <property type="term" value="P:fatty acid biosynthetic process"/>
    <property type="evidence" value="ECO:0007669"/>
    <property type="project" value="UniProtKB-UniRule"/>
</dbReference>
<dbReference type="Gene3D" id="3.90.470.20">
    <property type="entry name" value="4'-phosphopantetheinyl transferase domain"/>
    <property type="match status" value="1"/>
</dbReference>
<dbReference type="HAMAP" id="MF_00101">
    <property type="entry name" value="AcpS"/>
    <property type="match status" value="1"/>
</dbReference>
<dbReference type="InterPro" id="IPR008278">
    <property type="entry name" value="4-PPantetheinyl_Trfase_dom"/>
</dbReference>
<dbReference type="InterPro" id="IPR037143">
    <property type="entry name" value="4-PPantetheinyl_Trfase_dom_sf"/>
</dbReference>
<dbReference type="InterPro" id="IPR002582">
    <property type="entry name" value="ACPS"/>
</dbReference>
<dbReference type="InterPro" id="IPR004568">
    <property type="entry name" value="Ppantetheine-prot_Trfase_dom"/>
</dbReference>
<dbReference type="NCBIfam" id="TIGR00516">
    <property type="entry name" value="acpS"/>
    <property type="match status" value="1"/>
</dbReference>
<dbReference type="NCBIfam" id="TIGR00556">
    <property type="entry name" value="pantethn_trn"/>
    <property type="match status" value="1"/>
</dbReference>
<dbReference type="Pfam" id="PF01648">
    <property type="entry name" value="ACPS"/>
    <property type="match status" value="1"/>
</dbReference>
<dbReference type="SUPFAM" id="SSF56214">
    <property type="entry name" value="4'-phosphopantetheinyl transferase"/>
    <property type="match status" value="1"/>
</dbReference>
<protein>
    <recommendedName>
        <fullName evidence="1">Holo-[acyl-carrier-protein] synthase</fullName>
        <shortName evidence="1">Holo-ACP synthase</shortName>
        <ecNumber evidence="1">2.7.8.7</ecNumber>
    </recommendedName>
    <alternativeName>
        <fullName evidence="1">4'-phosphopantetheinyl transferase AcpS</fullName>
    </alternativeName>
</protein>
<sequence>MKISVGNDIVENARIRDLLEKHGDRFLKRIFSESEREYCSNRKDPVPHLSGRFCVKEAFIKAIEPKVVLDMREIELFGKEFGKKELVLHGKSKELFLTKGYNGCSVSISHAENYSTAVVVLYKE</sequence>
<comment type="function">
    <text evidence="1">Transfers the 4'-phosphopantetheine moiety from coenzyme A to a Ser of acyl-carrier-protein.</text>
</comment>
<comment type="catalytic activity">
    <reaction evidence="1">
        <text>apo-[ACP] + CoA = holo-[ACP] + adenosine 3',5'-bisphosphate + H(+)</text>
        <dbReference type="Rhea" id="RHEA:12068"/>
        <dbReference type="Rhea" id="RHEA-COMP:9685"/>
        <dbReference type="Rhea" id="RHEA-COMP:9690"/>
        <dbReference type="ChEBI" id="CHEBI:15378"/>
        <dbReference type="ChEBI" id="CHEBI:29999"/>
        <dbReference type="ChEBI" id="CHEBI:57287"/>
        <dbReference type="ChEBI" id="CHEBI:58343"/>
        <dbReference type="ChEBI" id="CHEBI:64479"/>
        <dbReference type="EC" id="2.7.8.7"/>
    </reaction>
</comment>
<comment type="cofactor">
    <cofactor evidence="1">
        <name>Mg(2+)</name>
        <dbReference type="ChEBI" id="CHEBI:18420"/>
    </cofactor>
</comment>
<comment type="subcellular location">
    <subcellularLocation>
        <location evidence="1">Cytoplasm</location>
    </subcellularLocation>
</comment>
<comment type="similarity">
    <text evidence="1">Belongs to the P-Pant transferase superfamily. AcpS family.</text>
</comment>
<accession>Q04U76</accession>
<keyword id="KW-0963">Cytoplasm</keyword>
<keyword id="KW-0275">Fatty acid biosynthesis</keyword>
<keyword id="KW-0276">Fatty acid metabolism</keyword>
<keyword id="KW-0444">Lipid biosynthesis</keyword>
<keyword id="KW-0443">Lipid metabolism</keyword>
<keyword id="KW-0460">Magnesium</keyword>
<keyword id="KW-0479">Metal-binding</keyword>
<keyword id="KW-0808">Transferase</keyword>
<evidence type="ECO:0000255" key="1">
    <source>
        <dbReference type="HAMAP-Rule" id="MF_00101"/>
    </source>
</evidence>